<comment type="function">
    <text evidence="9 10 11">Tubulin is the major constituent of microtubules, a cylinder consisting of laterally associated linear protofilaments composed of alpha- and beta-tubulin heterodimers (PubMed:2207090, PubMed:6504138, PubMed:7704569). Microtubules grow by the addition of GTP-tubulin dimers to the microtubule end, where a stabilizing cap forms. Below the cap, tubulin dimers are in GDP-bound state, owing to GTPase activity of alpha-tubulin (PubMed:2207090, PubMed:6504138, PubMed:7704569).</text>
</comment>
<comment type="cofactor">
    <cofactor evidence="3">
        <name>Mg(2+)</name>
        <dbReference type="ChEBI" id="CHEBI:18420"/>
    </cofactor>
</comment>
<comment type="subunit">
    <text evidence="9 10 11">Dimer of alpha and beta chains (PubMed:2207090, PubMed:6504138, PubMed:7704569). A typical microtubule is a hollow water-filled tube with an outer diameter of 25 nm and an inner diameter of 15 nM. Alpha-beta heterodimers associate head-to-tail to form protofilaments running lengthwise along the microtubule wall with the beta-tubulin subunit facing the microtubule plus end conferring a structural polarity. Microtubules usually have 13 protofilaments but different protofilament numbers can be found in some organisms and specialized cells.</text>
</comment>
<comment type="subcellular location">
    <subcellularLocation>
        <location evidence="9 10 11">Cytoplasm</location>
        <location evidence="9 10 11">Cytoskeleton</location>
    </subcellularLocation>
</comment>
<comment type="domain">
    <text evidence="1">The highly acidic C-terminal region may bind cations such as calcium.</text>
</comment>
<comment type="domain">
    <text evidence="2">The MREI motif is common among all beta-tubulin isoforms and may be critical for tubulin autoregulation.</text>
</comment>
<comment type="PTM">
    <text evidence="7">Some glutamate residues at the C-terminus are polyglycylated, resulting in polyglycine chains on the gamma-carboxyl group. Glycylation is mainly limited to tubulin incorporated into axonemes (cilia and flagella) whereas glutamylation is prevalent in neuronal cells, centrioles, axonemes, and the mitotic spindle. Both modifications can coexist on the same protein on adjacent residues, and lowering polyglycylation levels increases polyglutamylation, and reciprocally. Cilia and flagella glycylation is required for their stability and maintenance. Flagella glycylation controls sperm motility.</text>
</comment>
<comment type="PTM">
    <text evidence="6 7">Some glutamate residues at the C-terminus are polyglutamylated, resulting in polyglutamate chains on the gamma-carboxyl group (By similarity). Polyglutamylation plays a key role in microtubule severing by spastin (SPAST). SPAST preferentially recognizes and acts on microtubules decorated with short polyglutamate tails: severing activity by SPAST increases as the number of glutamates per tubulin rises from one to eight, but decreases beyond this glutamylation threshold (By similarity). Glutamylation is also involved in cilia motility (By similarity).</text>
</comment>
<comment type="PTM">
    <text evidence="8">Phosphorylated on Ser-172 by CDK1 during the cell cycle, from metaphase to telophase, but not in interphase. This phosphorylation inhibits tubulin incorporation into microtubules.</text>
</comment>
<comment type="similarity">
    <text evidence="12">Belongs to the tubulin family.</text>
</comment>
<name>TBB6_BOVIN</name>
<accession>Q2HJ81</accession>
<keyword id="KW-0963">Cytoplasm</keyword>
<keyword id="KW-0206">Cytoskeleton</keyword>
<keyword id="KW-0342">GTP-binding</keyword>
<keyword id="KW-1017">Isopeptide bond</keyword>
<keyword id="KW-0460">Magnesium</keyword>
<keyword id="KW-0479">Metal-binding</keyword>
<keyword id="KW-0493">Microtubule</keyword>
<keyword id="KW-0547">Nucleotide-binding</keyword>
<keyword id="KW-0597">Phosphoprotein</keyword>
<keyword id="KW-1185">Reference proteome</keyword>
<proteinExistence type="evidence at protein level"/>
<evidence type="ECO:0000250" key="1"/>
<evidence type="ECO:0000250" key="2">
    <source>
        <dbReference type="UniProtKB" id="P07437"/>
    </source>
</evidence>
<evidence type="ECO:0000250" key="3">
    <source>
        <dbReference type="UniProtKB" id="P68363"/>
    </source>
</evidence>
<evidence type="ECO:0000250" key="4">
    <source>
        <dbReference type="UniProtKB" id="Q13509"/>
    </source>
</evidence>
<evidence type="ECO:0000250" key="5">
    <source>
        <dbReference type="UniProtKB" id="Q2T9S0"/>
    </source>
</evidence>
<evidence type="ECO:0000250" key="6">
    <source>
        <dbReference type="UniProtKB" id="Q71U36"/>
    </source>
</evidence>
<evidence type="ECO:0000250" key="7">
    <source>
        <dbReference type="UniProtKB" id="Q922F4"/>
    </source>
</evidence>
<evidence type="ECO:0000250" key="8">
    <source>
        <dbReference type="UniProtKB" id="Q9BUF5"/>
    </source>
</evidence>
<evidence type="ECO:0000269" key="9">
    <source>
    </source>
</evidence>
<evidence type="ECO:0000269" key="10">
    <source>
    </source>
</evidence>
<evidence type="ECO:0000269" key="11">
    <source>
    </source>
</evidence>
<evidence type="ECO:0000305" key="12"/>
<gene>
    <name type="primary">TUBB6</name>
</gene>
<sequence>MREIVHIQAGQCGNQIGTKFWEVISDEHGIDPAGGYVGDSALQLERINVYYNESSSQKYVPRAALVDLEPGTMDSVRSGPFGQLFRPDNFIFGQTGAGNNWAKGHYTEGAELVDSVLDVVRKECEHCDCLQGFQLTHSLGGGTGSGMGTLLISKIREEYPDRIMNTFSVMPSPKVSDTVVEPYNATLSVHQLVENTDETYCIDNEALYDICFRTLKLTTPTYGDLNHLVSATMSGVTTSLRFPGQLNADLRKLAVNMVPFPRLHFFMPGFAPLTARGSQQYRALTVPELTQQMFDAKNMMAACDPRHGRYLTVAAVFRGPMSMKEVDEQMLAIQNKNSSYFVEWIPNNVKVAVCDIPPRGLKMSATFIGNSTAIQELFKRISEQFSAMFRRKAFLHWFTGEGMDEMEFTEAESNMNDLVSEYQQYQDATADEGEEAFEDDEEEVNE</sequence>
<dbReference type="EMBL" id="BC113260">
    <property type="protein sequence ID" value="AAI13261.1"/>
    <property type="molecule type" value="mRNA"/>
</dbReference>
<dbReference type="RefSeq" id="NP_001039838.1">
    <property type="nucleotide sequence ID" value="NM_001046373.1"/>
</dbReference>
<dbReference type="SMR" id="Q2HJ81"/>
<dbReference type="FunCoup" id="Q2HJ81">
    <property type="interactions" value="1098"/>
</dbReference>
<dbReference type="STRING" id="9913.ENSBTAP00000041770"/>
<dbReference type="PeptideAtlas" id="Q2HJ81"/>
<dbReference type="GeneID" id="534206"/>
<dbReference type="KEGG" id="bta:534206"/>
<dbReference type="CTD" id="84617"/>
<dbReference type="VEuPathDB" id="HostDB:ENSBTAG00000046337"/>
<dbReference type="InParanoid" id="Q2HJ81"/>
<dbReference type="OMA" id="FLTCCAI"/>
<dbReference type="OrthoDB" id="1662883at2759"/>
<dbReference type="Reactome" id="R-BTA-190840">
    <property type="pathway name" value="Microtubule-dependent trafficking of connexons from Golgi to the plasma membrane"/>
</dbReference>
<dbReference type="Reactome" id="R-BTA-2132295">
    <property type="pathway name" value="MHC class II antigen presentation"/>
</dbReference>
<dbReference type="Reactome" id="R-BTA-2467813">
    <property type="pathway name" value="Separation of Sister Chromatids"/>
</dbReference>
<dbReference type="Reactome" id="R-BTA-2500257">
    <property type="pathway name" value="Resolution of Sister Chromatid Cohesion"/>
</dbReference>
<dbReference type="Reactome" id="R-BTA-3371497">
    <property type="pathway name" value="HSP90 chaperone cycle for steroid hormone receptors (SHR) in the presence of ligand"/>
</dbReference>
<dbReference type="Reactome" id="R-BTA-380320">
    <property type="pathway name" value="Recruitment of NuMA to mitotic centrosomes"/>
</dbReference>
<dbReference type="Reactome" id="R-BTA-5610787">
    <property type="pathway name" value="Hedgehog 'off' state"/>
</dbReference>
<dbReference type="Reactome" id="R-BTA-5617833">
    <property type="pathway name" value="Cilium Assembly"/>
</dbReference>
<dbReference type="Reactome" id="R-BTA-5620924">
    <property type="pathway name" value="Intraflagellar transport"/>
</dbReference>
<dbReference type="Reactome" id="R-BTA-5626467">
    <property type="pathway name" value="RHO GTPases activate IQGAPs"/>
</dbReference>
<dbReference type="Reactome" id="R-BTA-5663220">
    <property type="pathway name" value="RHO GTPases Activate Formins"/>
</dbReference>
<dbReference type="Reactome" id="R-BTA-6807878">
    <property type="pathway name" value="COPI-mediated anterograde transport"/>
</dbReference>
<dbReference type="Reactome" id="R-BTA-6811434">
    <property type="pathway name" value="COPI-dependent Golgi-to-ER retrograde traffic"/>
</dbReference>
<dbReference type="Reactome" id="R-BTA-6811436">
    <property type="pathway name" value="COPI-independent Golgi-to-ER retrograde traffic"/>
</dbReference>
<dbReference type="Reactome" id="R-BTA-68877">
    <property type="pathway name" value="Mitotic Prometaphase"/>
</dbReference>
<dbReference type="Reactome" id="R-BTA-8852276">
    <property type="pathway name" value="The role of GTSE1 in G2/M progression after G2 checkpoint"/>
</dbReference>
<dbReference type="Reactome" id="R-BTA-8955332">
    <property type="pathway name" value="Carboxyterminal post-translational modifications of tubulin"/>
</dbReference>
<dbReference type="Reactome" id="R-BTA-9646399">
    <property type="pathway name" value="Aggrephagy"/>
</dbReference>
<dbReference type="Reactome" id="R-BTA-9648025">
    <property type="pathway name" value="EML4 and NUDC in mitotic spindle formation"/>
</dbReference>
<dbReference type="Reactome" id="R-BTA-9668328">
    <property type="pathway name" value="Sealing of the nuclear envelope (NE) by ESCRT-III"/>
</dbReference>
<dbReference type="Reactome" id="R-BTA-983189">
    <property type="pathway name" value="Kinesins"/>
</dbReference>
<dbReference type="Proteomes" id="UP000009136">
    <property type="component" value="Chromosome 24"/>
</dbReference>
<dbReference type="Bgee" id="ENSBTAG00000046337">
    <property type="expression patterns" value="Expressed in vas deferens and 107 other cell types or tissues"/>
</dbReference>
<dbReference type="GO" id="GO:0005737">
    <property type="term" value="C:cytoplasm"/>
    <property type="evidence" value="ECO:0000318"/>
    <property type="project" value="GO_Central"/>
</dbReference>
<dbReference type="GO" id="GO:0045171">
    <property type="term" value="C:intercellular bridge"/>
    <property type="evidence" value="ECO:0007669"/>
    <property type="project" value="Ensembl"/>
</dbReference>
<dbReference type="GO" id="GO:0005874">
    <property type="term" value="C:microtubule"/>
    <property type="evidence" value="ECO:0000318"/>
    <property type="project" value="GO_Central"/>
</dbReference>
<dbReference type="GO" id="GO:0072686">
    <property type="term" value="C:mitotic spindle"/>
    <property type="evidence" value="ECO:0007669"/>
    <property type="project" value="Ensembl"/>
</dbReference>
<dbReference type="GO" id="GO:0005525">
    <property type="term" value="F:GTP binding"/>
    <property type="evidence" value="ECO:0000318"/>
    <property type="project" value="GO_Central"/>
</dbReference>
<dbReference type="GO" id="GO:0003924">
    <property type="term" value="F:GTPase activity"/>
    <property type="evidence" value="ECO:0007669"/>
    <property type="project" value="InterPro"/>
</dbReference>
<dbReference type="GO" id="GO:0046872">
    <property type="term" value="F:metal ion binding"/>
    <property type="evidence" value="ECO:0007669"/>
    <property type="project" value="UniProtKB-KW"/>
</dbReference>
<dbReference type="GO" id="GO:0005200">
    <property type="term" value="F:structural constituent of cytoskeleton"/>
    <property type="evidence" value="ECO:0000318"/>
    <property type="project" value="GO_Central"/>
</dbReference>
<dbReference type="GO" id="GO:0000226">
    <property type="term" value="P:microtubule cytoskeleton organization"/>
    <property type="evidence" value="ECO:0000318"/>
    <property type="project" value="GO_Central"/>
</dbReference>
<dbReference type="GO" id="GO:0000278">
    <property type="term" value="P:mitotic cell cycle"/>
    <property type="evidence" value="ECO:0000318"/>
    <property type="project" value="GO_Central"/>
</dbReference>
<dbReference type="CDD" id="cd02187">
    <property type="entry name" value="beta_tubulin"/>
    <property type="match status" value="1"/>
</dbReference>
<dbReference type="FunFam" id="1.10.287.600:FF:000002">
    <property type="entry name" value="Tubulin beta chain"/>
    <property type="match status" value="1"/>
</dbReference>
<dbReference type="FunFam" id="3.30.1330.20:FF:000002">
    <property type="entry name" value="Tubulin beta chain"/>
    <property type="match status" value="1"/>
</dbReference>
<dbReference type="FunFam" id="3.40.50.1440:FF:000003">
    <property type="entry name" value="Tubulin beta chain"/>
    <property type="match status" value="1"/>
</dbReference>
<dbReference type="Gene3D" id="1.10.287.600">
    <property type="entry name" value="Helix hairpin bin"/>
    <property type="match status" value="1"/>
</dbReference>
<dbReference type="Gene3D" id="3.30.1330.20">
    <property type="entry name" value="Tubulin/FtsZ, C-terminal domain"/>
    <property type="match status" value="1"/>
</dbReference>
<dbReference type="Gene3D" id="3.40.50.1440">
    <property type="entry name" value="Tubulin/FtsZ, GTPase domain"/>
    <property type="match status" value="1"/>
</dbReference>
<dbReference type="InterPro" id="IPR013838">
    <property type="entry name" value="Beta-tubulin_BS"/>
</dbReference>
<dbReference type="InterPro" id="IPR002453">
    <property type="entry name" value="Beta_tubulin"/>
</dbReference>
<dbReference type="InterPro" id="IPR008280">
    <property type="entry name" value="Tub_FtsZ_C"/>
</dbReference>
<dbReference type="InterPro" id="IPR000217">
    <property type="entry name" value="Tubulin"/>
</dbReference>
<dbReference type="InterPro" id="IPR037103">
    <property type="entry name" value="Tubulin/FtsZ-like_C"/>
</dbReference>
<dbReference type="InterPro" id="IPR018316">
    <property type="entry name" value="Tubulin/FtsZ_2-layer-sand-dom"/>
</dbReference>
<dbReference type="InterPro" id="IPR036525">
    <property type="entry name" value="Tubulin/FtsZ_GTPase_sf"/>
</dbReference>
<dbReference type="InterPro" id="IPR023123">
    <property type="entry name" value="Tubulin_C"/>
</dbReference>
<dbReference type="InterPro" id="IPR017975">
    <property type="entry name" value="Tubulin_CS"/>
</dbReference>
<dbReference type="InterPro" id="IPR003008">
    <property type="entry name" value="Tubulin_FtsZ_GTPase"/>
</dbReference>
<dbReference type="PANTHER" id="PTHR11588">
    <property type="entry name" value="TUBULIN"/>
    <property type="match status" value="1"/>
</dbReference>
<dbReference type="Pfam" id="PF00091">
    <property type="entry name" value="Tubulin"/>
    <property type="match status" value="1"/>
</dbReference>
<dbReference type="Pfam" id="PF03953">
    <property type="entry name" value="Tubulin_C"/>
    <property type="match status" value="1"/>
</dbReference>
<dbReference type="PRINTS" id="PR01163">
    <property type="entry name" value="BETATUBULIN"/>
</dbReference>
<dbReference type="PRINTS" id="PR01161">
    <property type="entry name" value="TUBULIN"/>
</dbReference>
<dbReference type="SMART" id="SM00864">
    <property type="entry name" value="Tubulin"/>
    <property type="match status" value="1"/>
</dbReference>
<dbReference type="SMART" id="SM00865">
    <property type="entry name" value="Tubulin_C"/>
    <property type="match status" value="1"/>
</dbReference>
<dbReference type="SUPFAM" id="SSF55307">
    <property type="entry name" value="Tubulin C-terminal domain-like"/>
    <property type="match status" value="1"/>
</dbReference>
<dbReference type="SUPFAM" id="SSF52490">
    <property type="entry name" value="Tubulin nucleotide-binding domain-like"/>
    <property type="match status" value="1"/>
</dbReference>
<dbReference type="PROSITE" id="PS00227">
    <property type="entry name" value="TUBULIN"/>
    <property type="match status" value="1"/>
</dbReference>
<dbReference type="PROSITE" id="PS00228">
    <property type="entry name" value="TUBULIN_B_AUTOREG"/>
    <property type="match status" value="1"/>
</dbReference>
<feature type="chain" id="PRO_0000288845" description="Tubulin beta-6 chain">
    <location>
        <begin position="1"/>
        <end position="446"/>
    </location>
</feature>
<feature type="short sequence motif" description="MREI motif" evidence="2">
    <location>
        <begin position="1"/>
        <end position="4"/>
    </location>
</feature>
<feature type="binding site" evidence="4">
    <location>
        <position position="11"/>
    </location>
    <ligand>
        <name>GTP</name>
        <dbReference type="ChEBI" id="CHEBI:37565"/>
    </ligand>
</feature>
<feature type="binding site" evidence="3">
    <location>
        <position position="69"/>
    </location>
    <ligand>
        <name>GTP</name>
        <dbReference type="ChEBI" id="CHEBI:37565"/>
    </ligand>
</feature>
<feature type="binding site" evidence="3">
    <location>
        <position position="69"/>
    </location>
    <ligand>
        <name>Mg(2+)</name>
        <dbReference type="ChEBI" id="CHEBI:18420"/>
    </ligand>
</feature>
<feature type="binding site" evidence="4">
    <location>
        <position position="138"/>
    </location>
    <ligand>
        <name>GTP</name>
        <dbReference type="ChEBI" id="CHEBI:37565"/>
    </ligand>
</feature>
<feature type="binding site" evidence="4">
    <location>
        <position position="142"/>
    </location>
    <ligand>
        <name>GTP</name>
        <dbReference type="ChEBI" id="CHEBI:37565"/>
    </ligand>
</feature>
<feature type="binding site" evidence="4">
    <location>
        <position position="143"/>
    </location>
    <ligand>
        <name>GTP</name>
        <dbReference type="ChEBI" id="CHEBI:37565"/>
    </ligand>
</feature>
<feature type="binding site" evidence="4">
    <location>
        <position position="144"/>
    </location>
    <ligand>
        <name>GTP</name>
        <dbReference type="ChEBI" id="CHEBI:37565"/>
    </ligand>
</feature>
<feature type="binding site" evidence="4">
    <location>
        <position position="204"/>
    </location>
    <ligand>
        <name>GTP</name>
        <dbReference type="ChEBI" id="CHEBI:37565"/>
    </ligand>
</feature>
<feature type="binding site" evidence="4">
    <location>
        <position position="226"/>
    </location>
    <ligand>
        <name>GTP</name>
        <dbReference type="ChEBI" id="CHEBI:37565"/>
    </ligand>
</feature>
<feature type="modified residue" description="Phosphoserine; by CDK1" evidence="8">
    <location>
        <position position="172"/>
    </location>
</feature>
<feature type="modified residue" description="5-glutamyl polyglutamate" evidence="5">
    <location>
        <position position="438"/>
    </location>
</feature>
<reference key="1">
    <citation type="submission" date="2006-02" db="EMBL/GenBank/DDBJ databases">
        <authorList>
            <consortium name="NIH - Mammalian Gene Collection (MGC) project"/>
        </authorList>
    </citation>
    <scope>NUCLEOTIDE SEQUENCE [LARGE SCALE MRNA]</scope>
    <source>
        <strain>Hereford</strain>
        <tissue>Uterus</tissue>
    </source>
</reference>
<reference key="2">
    <citation type="journal article" date="1984" name="Nature">
        <title>Dynamic instability of microtubule growth.</title>
        <authorList>
            <person name="Mitchison T."/>
            <person name="Kirschner M."/>
        </authorList>
    </citation>
    <scope>FUNCTION</scope>
    <scope>SUBUNIT</scope>
    <scope>SUBCELLULAR LOCATION</scope>
</reference>
<reference key="3">
    <citation type="journal article" date="1990" name="Biochemistry">
        <title>Role of GTP hydrolysis in microtubule polymerization: evidence for a coupled hydrolysis mechanism.</title>
        <authorList>
            <person name="Stewart R.J."/>
            <person name="Farrell K.W."/>
            <person name="Wilson L."/>
        </authorList>
    </citation>
    <scope>FUNCTION</scope>
    <scope>SUBUNIT</scope>
    <scope>SUBCELLULAR LOCATION</scope>
</reference>
<reference key="4">
    <citation type="journal article" date="1994" name="Curr. Biol.">
        <title>The minimum GTP cap required to stabilize microtubules.</title>
        <authorList>
            <person name="Drechsel D.N."/>
            <person name="Kirschner M.W."/>
        </authorList>
    </citation>
    <scope>FUNCTION</scope>
    <scope>SUBUNIT</scope>
    <scope>SUBCELLULAR LOCATION</scope>
</reference>
<protein>
    <recommendedName>
        <fullName>Tubulin beta-6 chain</fullName>
    </recommendedName>
</protein>
<organism>
    <name type="scientific">Bos taurus</name>
    <name type="common">Bovine</name>
    <dbReference type="NCBI Taxonomy" id="9913"/>
    <lineage>
        <taxon>Eukaryota</taxon>
        <taxon>Metazoa</taxon>
        <taxon>Chordata</taxon>
        <taxon>Craniata</taxon>
        <taxon>Vertebrata</taxon>
        <taxon>Euteleostomi</taxon>
        <taxon>Mammalia</taxon>
        <taxon>Eutheria</taxon>
        <taxon>Laurasiatheria</taxon>
        <taxon>Artiodactyla</taxon>
        <taxon>Ruminantia</taxon>
        <taxon>Pecora</taxon>
        <taxon>Bovidae</taxon>
        <taxon>Bovinae</taxon>
        <taxon>Bos</taxon>
    </lineage>
</organism>